<sequence length="497" mass="51988">MSGDPGLEALKARVAEVPLGPEIEETGRIATLADGLVEVEGLPGARLGEVVRFAGGAEGLVLTLDPETVQVALLDPGAALGSGTEVRRTGQLLSVPVGQGLLGRVVDPLGRPLDGLPAILPEARLEIERPAPGIVDRDMVAEPVETGLLVVDALFAVGRGQRELIIGERATGKTSLAVDAIVNQAASDIVCFYVAIGQRTTAVRRVIETVREKGAFARTVFVVAPATASPGLRWIAPFAATSMAEWVRDRGGHALIVYDDLTKHAAVHRELALLARQPPGREAYPGDIFYLHARLLERSAKLSAVNGGGSLTALPIAEIEAGNLSAYIPTNLISIADGQIVTSAALFAANQRPAVDIGLSVSRVGGKAQRGALKAVAGRVRLDYAQYLEMKMFSRFGGFGDAALRARLARGERIGALLAQPRTTPLSTPVQVALLAALAEGALDDVPLEDLTRLKAALGPVLAADASLGPFCAAPDRLEPETRAALLACVRRAREAP</sequence>
<evidence type="ECO:0000250" key="1"/>
<evidence type="ECO:0000255" key="2">
    <source>
        <dbReference type="HAMAP-Rule" id="MF_01346"/>
    </source>
</evidence>
<accession>A3PS65</accession>
<feature type="chain" id="PRO_0000339052" description="ATP synthase subunit alpha 2">
    <location>
        <begin position="1"/>
        <end position="497"/>
    </location>
</feature>
<feature type="binding site" evidence="2">
    <location>
        <begin position="167"/>
        <end position="174"/>
    </location>
    <ligand>
        <name>ATP</name>
        <dbReference type="ChEBI" id="CHEBI:30616"/>
    </ligand>
</feature>
<feature type="site" description="Required for activity" evidence="2">
    <location>
        <position position="360"/>
    </location>
</feature>
<reference key="1">
    <citation type="submission" date="2007-02" db="EMBL/GenBank/DDBJ databases">
        <title>Complete sequence of plasmid pRSPH01 of Rhodobacter sphaeroides ATCC 17029.</title>
        <authorList>
            <person name="Copeland A."/>
            <person name="Lucas S."/>
            <person name="Lapidus A."/>
            <person name="Barry K."/>
            <person name="Detter J.C."/>
            <person name="Glavina del Rio T."/>
            <person name="Hammon N."/>
            <person name="Israni S."/>
            <person name="Dalin E."/>
            <person name="Tice H."/>
            <person name="Pitluck S."/>
            <person name="Kiss H."/>
            <person name="Brettin T."/>
            <person name="Bruce D."/>
            <person name="Han C."/>
            <person name="Tapia R."/>
            <person name="Gilna P."/>
            <person name="Schmutz J."/>
            <person name="Larimer F."/>
            <person name="Land M."/>
            <person name="Hauser L."/>
            <person name="Kyrpides N."/>
            <person name="Mikhailova N."/>
            <person name="Richardson P."/>
            <person name="Mackenzie C."/>
            <person name="Choudhary M."/>
            <person name="Donohue T.J."/>
            <person name="Kaplan S."/>
        </authorList>
    </citation>
    <scope>NUCLEOTIDE SEQUENCE [LARGE SCALE GENOMIC DNA]</scope>
    <source>
        <strain>ATCC 17029 / ATH 2.4.9</strain>
    </source>
</reference>
<comment type="function">
    <text evidence="2">Produces ATP from ADP in the presence of a proton gradient across the membrane. The alpha chain is a regulatory subunit.</text>
</comment>
<comment type="catalytic activity">
    <reaction evidence="2">
        <text>ATP + H2O + 4 H(+)(in) = ADP + phosphate + 5 H(+)(out)</text>
        <dbReference type="Rhea" id="RHEA:57720"/>
        <dbReference type="ChEBI" id="CHEBI:15377"/>
        <dbReference type="ChEBI" id="CHEBI:15378"/>
        <dbReference type="ChEBI" id="CHEBI:30616"/>
        <dbReference type="ChEBI" id="CHEBI:43474"/>
        <dbReference type="ChEBI" id="CHEBI:456216"/>
        <dbReference type="EC" id="7.1.2.2"/>
    </reaction>
</comment>
<comment type="subunit">
    <text evidence="1">F-type ATPases have 2 components, CF(1) - the catalytic core - and CF(0) - the membrane proton channel. CF(1) has five subunits: alpha(3), beta(3), gamma(1), delta(1), epsilon(1). CF(0) has four main subunits: a(1), b(1), b'(1) and c(9-12) (By similarity).</text>
</comment>
<comment type="subcellular location">
    <subcellularLocation>
        <location evidence="2">Cell inner membrane</location>
        <topology evidence="2">Peripheral membrane protein</topology>
    </subcellularLocation>
</comment>
<comment type="similarity">
    <text evidence="2">Belongs to the ATPase alpha/beta chains family.</text>
</comment>
<proteinExistence type="inferred from homology"/>
<geneLocation type="plasmid">
    <name>pRSPH01</name>
</geneLocation>
<protein>
    <recommendedName>
        <fullName evidence="2">ATP synthase subunit alpha 2</fullName>
        <ecNumber evidence="2">7.1.2.2</ecNumber>
    </recommendedName>
    <alternativeName>
        <fullName evidence="2">ATP synthase F1 sector subunit alpha 2</fullName>
    </alternativeName>
    <alternativeName>
        <fullName evidence="2">F-ATPase subunit alpha 2</fullName>
    </alternativeName>
</protein>
<dbReference type="EC" id="7.1.2.2" evidence="2"/>
<dbReference type="EMBL" id="CP000579">
    <property type="protein sequence ID" value="ABN79181.1"/>
    <property type="molecule type" value="Genomic_DNA"/>
</dbReference>
<dbReference type="RefSeq" id="WP_011840049.1">
    <property type="nucleotide sequence ID" value="NC_009040.1"/>
</dbReference>
<dbReference type="SMR" id="A3PS65"/>
<dbReference type="KEGG" id="rsh:Rsph17029_4103"/>
<dbReference type="HOGENOM" id="CLU_010091_2_1_5"/>
<dbReference type="GO" id="GO:0005886">
    <property type="term" value="C:plasma membrane"/>
    <property type="evidence" value="ECO:0007669"/>
    <property type="project" value="UniProtKB-SubCell"/>
</dbReference>
<dbReference type="GO" id="GO:0045259">
    <property type="term" value="C:proton-transporting ATP synthase complex"/>
    <property type="evidence" value="ECO:0007669"/>
    <property type="project" value="UniProtKB-KW"/>
</dbReference>
<dbReference type="GO" id="GO:0043531">
    <property type="term" value="F:ADP binding"/>
    <property type="evidence" value="ECO:0007669"/>
    <property type="project" value="TreeGrafter"/>
</dbReference>
<dbReference type="GO" id="GO:0005524">
    <property type="term" value="F:ATP binding"/>
    <property type="evidence" value="ECO:0007669"/>
    <property type="project" value="UniProtKB-UniRule"/>
</dbReference>
<dbReference type="GO" id="GO:0046933">
    <property type="term" value="F:proton-transporting ATP synthase activity, rotational mechanism"/>
    <property type="evidence" value="ECO:0007669"/>
    <property type="project" value="UniProtKB-UniRule"/>
</dbReference>
<dbReference type="CDD" id="cd18113">
    <property type="entry name" value="ATP-synt_F1_alpha_C"/>
    <property type="match status" value="1"/>
</dbReference>
<dbReference type="CDD" id="cd01132">
    <property type="entry name" value="F1-ATPase_alpha_CD"/>
    <property type="match status" value="1"/>
</dbReference>
<dbReference type="FunFam" id="3.40.50.300:FF:004039">
    <property type="entry name" value="ATP synthase subunit alpha, mitochondrial"/>
    <property type="match status" value="1"/>
</dbReference>
<dbReference type="Gene3D" id="2.40.30.20">
    <property type="match status" value="1"/>
</dbReference>
<dbReference type="Gene3D" id="1.20.150.20">
    <property type="entry name" value="ATP synthase alpha/beta chain, C-terminal domain"/>
    <property type="match status" value="1"/>
</dbReference>
<dbReference type="Gene3D" id="3.40.50.300">
    <property type="entry name" value="P-loop containing nucleotide triphosphate hydrolases"/>
    <property type="match status" value="1"/>
</dbReference>
<dbReference type="HAMAP" id="MF_01346">
    <property type="entry name" value="ATP_synth_alpha_bact"/>
    <property type="match status" value="1"/>
</dbReference>
<dbReference type="InterPro" id="IPR023366">
    <property type="entry name" value="ATP_synth_asu-like_sf"/>
</dbReference>
<dbReference type="InterPro" id="IPR000793">
    <property type="entry name" value="ATP_synth_asu_C"/>
</dbReference>
<dbReference type="InterPro" id="IPR038376">
    <property type="entry name" value="ATP_synth_asu_C_sf"/>
</dbReference>
<dbReference type="InterPro" id="IPR033732">
    <property type="entry name" value="ATP_synth_F1_a_nt-bd_dom"/>
</dbReference>
<dbReference type="InterPro" id="IPR005294">
    <property type="entry name" value="ATP_synth_F1_asu"/>
</dbReference>
<dbReference type="InterPro" id="IPR020003">
    <property type="entry name" value="ATPase_a/bsu_AS"/>
</dbReference>
<dbReference type="InterPro" id="IPR036121">
    <property type="entry name" value="ATPase_F1/V1/A1_a/bsu_N_sf"/>
</dbReference>
<dbReference type="InterPro" id="IPR000194">
    <property type="entry name" value="ATPase_F1/V1/A1_a/bsu_nucl-bd"/>
</dbReference>
<dbReference type="InterPro" id="IPR027417">
    <property type="entry name" value="P-loop_NTPase"/>
</dbReference>
<dbReference type="NCBIfam" id="TIGR00962">
    <property type="entry name" value="atpA"/>
    <property type="match status" value="1"/>
</dbReference>
<dbReference type="NCBIfam" id="NF009884">
    <property type="entry name" value="PRK13343.1"/>
    <property type="match status" value="1"/>
</dbReference>
<dbReference type="PANTHER" id="PTHR48082">
    <property type="entry name" value="ATP SYNTHASE SUBUNIT ALPHA, MITOCHONDRIAL"/>
    <property type="match status" value="1"/>
</dbReference>
<dbReference type="PANTHER" id="PTHR48082:SF2">
    <property type="entry name" value="ATP SYNTHASE SUBUNIT ALPHA, MITOCHONDRIAL"/>
    <property type="match status" value="1"/>
</dbReference>
<dbReference type="Pfam" id="PF00006">
    <property type="entry name" value="ATP-synt_ab"/>
    <property type="match status" value="1"/>
</dbReference>
<dbReference type="Pfam" id="PF00306">
    <property type="entry name" value="ATP-synt_ab_C"/>
    <property type="match status" value="1"/>
</dbReference>
<dbReference type="SUPFAM" id="SSF47917">
    <property type="entry name" value="C-terminal domain of alpha and beta subunits of F1 ATP synthase"/>
    <property type="match status" value="1"/>
</dbReference>
<dbReference type="SUPFAM" id="SSF50615">
    <property type="entry name" value="N-terminal domain of alpha and beta subunits of F1 ATP synthase"/>
    <property type="match status" value="1"/>
</dbReference>
<dbReference type="SUPFAM" id="SSF52540">
    <property type="entry name" value="P-loop containing nucleoside triphosphate hydrolases"/>
    <property type="match status" value="1"/>
</dbReference>
<dbReference type="PROSITE" id="PS00152">
    <property type="entry name" value="ATPASE_ALPHA_BETA"/>
    <property type="match status" value="1"/>
</dbReference>
<keyword id="KW-0066">ATP synthesis</keyword>
<keyword id="KW-0067">ATP-binding</keyword>
<keyword id="KW-0997">Cell inner membrane</keyword>
<keyword id="KW-1003">Cell membrane</keyword>
<keyword id="KW-0139">CF(1)</keyword>
<keyword id="KW-0375">Hydrogen ion transport</keyword>
<keyword id="KW-0406">Ion transport</keyword>
<keyword id="KW-0472">Membrane</keyword>
<keyword id="KW-0547">Nucleotide-binding</keyword>
<keyword id="KW-0614">Plasmid</keyword>
<keyword id="KW-1278">Translocase</keyword>
<keyword id="KW-0813">Transport</keyword>
<name>ATPA2_CERS1</name>
<organism>
    <name type="scientific">Cereibacter sphaeroides (strain ATCC 17029 / ATH 2.4.9)</name>
    <name type="common">Rhodobacter sphaeroides</name>
    <dbReference type="NCBI Taxonomy" id="349101"/>
    <lineage>
        <taxon>Bacteria</taxon>
        <taxon>Pseudomonadati</taxon>
        <taxon>Pseudomonadota</taxon>
        <taxon>Alphaproteobacteria</taxon>
        <taxon>Rhodobacterales</taxon>
        <taxon>Paracoccaceae</taxon>
        <taxon>Cereibacter</taxon>
    </lineage>
</organism>
<gene>
    <name evidence="2" type="primary">atpA2</name>
    <name type="ordered locus">Rsph17029_4103</name>
</gene>